<gene>
    <name evidence="1" type="primary">pxpA</name>
    <name type="ordered locus">MCA0476</name>
</gene>
<organism>
    <name type="scientific">Methylococcus capsulatus (strain ATCC 33009 / NCIMB 11132 / Bath)</name>
    <dbReference type="NCBI Taxonomy" id="243233"/>
    <lineage>
        <taxon>Bacteria</taxon>
        <taxon>Pseudomonadati</taxon>
        <taxon>Pseudomonadota</taxon>
        <taxon>Gammaproteobacteria</taxon>
        <taxon>Methylococcales</taxon>
        <taxon>Methylococcaceae</taxon>
        <taxon>Methylococcus</taxon>
    </lineage>
</organism>
<sequence length="260" mass="27013">MARTIDLNADLGESFGPWRMGQDETLLELVTSANIACGFHAGDPDVMAETVRLAVSRGVALGAHPSLPDRQGFGRRPMALRPDEIRNLVLYQIGALAGFARAAGGRLVHVKPHGALYGQAASDAAMAEAIAAAVRAFDANLILVGPAGSQLVRAGQAAGLAIAREGFADRRYEPDGTLTPRGRPEALIEEPAEAVAQALGMVERGEVTARDGTVIPMPVDTLCLHGDGPDAAAFARRLRMELAARGIPVAALGGWLSGAA</sequence>
<reference key="1">
    <citation type="journal article" date="2004" name="PLoS Biol.">
        <title>Genomic insights into methanotrophy: the complete genome sequence of Methylococcus capsulatus (Bath).</title>
        <authorList>
            <person name="Ward N.L."/>
            <person name="Larsen O."/>
            <person name="Sakwa J."/>
            <person name="Bruseth L."/>
            <person name="Khouri H.M."/>
            <person name="Durkin A.S."/>
            <person name="Dimitrov G."/>
            <person name="Jiang L."/>
            <person name="Scanlan D."/>
            <person name="Kang K.H."/>
            <person name="Lewis M.R."/>
            <person name="Nelson K.E."/>
            <person name="Methe B.A."/>
            <person name="Wu M."/>
            <person name="Heidelberg J.F."/>
            <person name="Paulsen I.T."/>
            <person name="Fouts D.E."/>
            <person name="Ravel J."/>
            <person name="Tettelin H."/>
            <person name="Ren Q."/>
            <person name="Read T.D."/>
            <person name="DeBoy R.T."/>
            <person name="Seshadri R."/>
            <person name="Salzberg S.L."/>
            <person name="Jensen H.B."/>
            <person name="Birkeland N.K."/>
            <person name="Nelson W.C."/>
            <person name="Dodson R.J."/>
            <person name="Grindhaug S.H."/>
            <person name="Holt I.E."/>
            <person name="Eidhammer I."/>
            <person name="Jonasen I."/>
            <person name="Vanaken S."/>
            <person name="Utterback T.R."/>
            <person name="Feldblyum T.V."/>
            <person name="Fraser C.M."/>
            <person name="Lillehaug J.R."/>
            <person name="Eisen J.A."/>
        </authorList>
    </citation>
    <scope>NUCLEOTIDE SEQUENCE [LARGE SCALE GENOMIC DNA]</scope>
    <source>
        <strain>ATCC 33009 / NCIMB 11132 / Bath</strain>
    </source>
</reference>
<proteinExistence type="inferred from homology"/>
<evidence type="ECO:0000255" key="1">
    <source>
        <dbReference type="HAMAP-Rule" id="MF_00691"/>
    </source>
</evidence>
<comment type="function">
    <text evidence="1">Catalyzes the cleavage of 5-oxoproline to form L-glutamate coupled to the hydrolysis of ATP to ADP and inorganic phosphate.</text>
</comment>
<comment type="catalytic activity">
    <reaction evidence="1">
        <text>5-oxo-L-proline + ATP + 2 H2O = L-glutamate + ADP + phosphate + H(+)</text>
        <dbReference type="Rhea" id="RHEA:10348"/>
        <dbReference type="ChEBI" id="CHEBI:15377"/>
        <dbReference type="ChEBI" id="CHEBI:15378"/>
        <dbReference type="ChEBI" id="CHEBI:29985"/>
        <dbReference type="ChEBI" id="CHEBI:30616"/>
        <dbReference type="ChEBI" id="CHEBI:43474"/>
        <dbReference type="ChEBI" id="CHEBI:58402"/>
        <dbReference type="ChEBI" id="CHEBI:456216"/>
        <dbReference type="EC" id="3.5.2.9"/>
    </reaction>
</comment>
<comment type="subunit">
    <text evidence="1">Forms a complex composed of PxpA, PxpB and PxpC.</text>
</comment>
<comment type="similarity">
    <text evidence="1">Belongs to the LamB/PxpA family.</text>
</comment>
<dbReference type="EC" id="3.5.2.9" evidence="1"/>
<dbReference type="EMBL" id="AE017282">
    <property type="protein sequence ID" value="AAU90347.1"/>
    <property type="molecule type" value="Genomic_DNA"/>
</dbReference>
<dbReference type="RefSeq" id="WP_010959833.1">
    <property type="nucleotide sequence ID" value="NC_002977.6"/>
</dbReference>
<dbReference type="SMR" id="Q60BJ2"/>
<dbReference type="STRING" id="243233.MCA0476"/>
<dbReference type="GeneID" id="88222817"/>
<dbReference type="KEGG" id="mca:MCA0476"/>
<dbReference type="eggNOG" id="COG1540">
    <property type="taxonomic scope" value="Bacteria"/>
</dbReference>
<dbReference type="HOGENOM" id="CLU_069535_0_0_6"/>
<dbReference type="Proteomes" id="UP000006821">
    <property type="component" value="Chromosome"/>
</dbReference>
<dbReference type="GO" id="GO:0017168">
    <property type="term" value="F:5-oxoprolinase (ATP-hydrolyzing) activity"/>
    <property type="evidence" value="ECO:0007669"/>
    <property type="project" value="UniProtKB-UniRule"/>
</dbReference>
<dbReference type="GO" id="GO:0005524">
    <property type="term" value="F:ATP binding"/>
    <property type="evidence" value="ECO:0007669"/>
    <property type="project" value="UniProtKB-UniRule"/>
</dbReference>
<dbReference type="GO" id="GO:0005975">
    <property type="term" value="P:carbohydrate metabolic process"/>
    <property type="evidence" value="ECO:0007669"/>
    <property type="project" value="InterPro"/>
</dbReference>
<dbReference type="CDD" id="cd10787">
    <property type="entry name" value="LamB_YcsF_like"/>
    <property type="match status" value="1"/>
</dbReference>
<dbReference type="Gene3D" id="3.20.20.370">
    <property type="entry name" value="Glycoside hydrolase/deacetylase"/>
    <property type="match status" value="1"/>
</dbReference>
<dbReference type="HAMAP" id="MF_00691">
    <property type="entry name" value="PxpA"/>
    <property type="match status" value="1"/>
</dbReference>
<dbReference type="InterPro" id="IPR011330">
    <property type="entry name" value="Glyco_hydro/deAcase_b/a-brl"/>
</dbReference>
<dbReference type="InterPro" id="IPR005501">
    <property type="entry name" value="LamB/YcsF/PxpA-like"/>
</dbReference>
<dbReference type="NCBIfam" id="NF003814">
    <property type="entry name" value="PRK05406.1-3"/>
    <property type="match status" value="1"/>
</dbReference>
<dbReference type="NCBIfam" id="NF003816">
    <property type="entry name" value="PRK05406.1-5"/>
    <property type="match status" value="1"/>
</dbReference>
<dbReference type="PANTHER" id="PTHR30292:SF0">
    <property type="entry name" value="5-OXOPROLINASE SUBUNIT A"/>
    <property type="match status" value="1"/>
</dbReference>
<dbReference type="PANTHER" id="PTHR30292">
    <property type="entry name" value="UNCHARACTERIZED PROTEIN YBGL-RELATED"/>
    <property type="match status" value="1"/>
</dbReference>
<dbReference type="Pfam" id="PF03746">
    <property type="entry name" value="LamB_YcsF"/>
    <property type="match status" value="1"/>
</dbReference>
<dbReference type="SUPFAM" id="SSF88713">
    <property type="entry name" value="Glycoside hydrolase/deacetylase"/>
    <property type="match status" value="1"/>
</dbReference>
<protein>
    <recommendedName>
        <fullName evidence="1">5-oxoprolinase subunit A</fullName>
        <shortName evidence="1">5-OPase subunit A</shortName>
        <ecNumber evidence="1">3.5.2.9</ecNumber>
    </recommendedName>
    <alternativeName>
        <fullName evidence="1">5-oxoprolinase (ATP-hydrolyzing) subunit A</fullName>
    </alternativeName>
</protein>
<keyword id="KW-0067">ATP-binding</keyword>
<keyword id="KW-0378">Hydrolase</keyword>
<keyword id="KW-0547">Nucleotide-binding</keyword>
<keyword id="KW-1185">Reference proteome</keyword>
<accession>Q60BJ2</accession>
<name>PXPA_METCA</name>
<feature type="chain" id="PRO_0000185016" description="5-oxoprolinase subunit A">
    <location>
        <begin position="1"/>
        <end position="260"/>
    </location>
</feature>